<comment type="function">
    <text evidence="1">Probably deamidates glutamine residues to glutamate on methyl-accepting chemotaxis receptors (MCPs), playing an important role in chemotaxis.</text>
</comment>
<comment type="catalytic activity">
    <reaction evidence="1">
        <text>L-glutaminyl-[protein] + H2O = L-glutamyl-[protein] + NH4(+)</text>
        <dbReference type="Rhea" id="RHEA:16441"/>
        <dbReference type="Rhea" id="RHEA-COMP:10207"/>
        <dbReference type="Rhea" id="RHEA-COMP:10208"/>
        <dbReference type="ChEBI" id="CHEBI:15377"/>
        <dbReference type="ChEBI" id="CHEBI:28938"/>
        <dbReference type="ChEBI" id="CHEBI:29973"/>
        <dbReference type="ChEBI" id="CHEBI:30011"/>
        <dbReference type="EC" id="3.5.1.44"/>
    </reaction>
</comment>
<comment type="similarity">
    <text evidence="1">Belongs to the CheD family.</text>
</comment>
<name>CHED_CERSP</name>
<sequence>MTRCDDRPSASQISITHVTQGSCVASSSPNEVYATILGSCICTCMCDPVAGVGGMNHFLLPSADVEDAQHLRYGSHAMELLINALLKLGAARQRIEAKIFGGAMMTPQLGAIGQANAAFARRYLRDEGIRCTAHSLGGNRARRIRFWPKTGRVQQMFLGSEDVVPNEQPQFRLQGGAGDVTFFDRHNNAEMPDPIKEPR</sequence>
<dbReference type="EC" id="3.5.1.44" evidence="1"/>
<dbReference type="EMBL" id="X80205">
    <property type="protein sequence ID" value="CAB87132.1"/>
    <property type="molecule type" value="Genomic_DNA"/>
</dbReference>
<dbReference type="SMR" id="Q9JN41"/>
<dbReference type="GO" id="GO:0050568">
    <property type="term" value="F:protein-glutamine glutaminase activity"/>
    <property type="evidence" value="ECO:0007669"/>
    <property type="project" value="UniProtKB-UniRule"/>
</dbReference>
<dbReference type="GO" id="GO:0006935">
    <property type="term" value="P:chemotaxis"/>
    <property type="evidence" value="ECO:0007669"/>
    <property type="project" value="UniProtKB-UniRule"/>
</dbReference>
<dbReference type="CDD" id="cd16352">
    <property type="entry name" value="CheD"/>
    <property type="match status" value="1"/>
</dbReference>
<dbReference type="Gene3D" id="3.30.1330.200">
    <property type="match status" value="1"/>
</dbReference>
<dbReference type="HAMAP" id="MF_01440">
    <property type="entry name" value="CheD"/>
    <property type="match status" value="1"/>
</dbReference>
<dbReference type="InterPro" id="IPR038592">
    <property type="entry name" value="CheD-like_sf"/>
</dbReference>
<dbReference type="InterPro" id="IPR005659">
    <property type="entry name" value="Chemorcpt_Glu_NH3ase_CheD"/>
</dbReference>
<dbReference type="InterPro" id="IPR011324">
    <property type="entry name" value="Cytotoxic_necrot_fac-like_cat"/>
</dbReference>
<dbReference type="PANTHER" id="PTHR35147">
    <property type="entry name" value="CHEMORECEPTOR GLUTAMINE DEAMIDASE CHED-RELATED"/>
    <property type="match status" value="1"/>
</dbReference>
<dbReference type="PANTHER" id="PTHR35147:SF2">
    <property type="entry name" value="CHEMORECEPTOR GLUTAMINE DEAMIDASE CHED-RELATED"/>
    <property type="match status" value="1"/>
</dbReference>
<dbReference type="Pfam" id="PF03975">
    <property type="entry name" value="CheD"/>
    <property type="match status" value="1"/>
</dbReference>
<dbReference type="SUPFAM" id="SSF64438">
    <property type="entry name" value="CNF1/YfiH-like putative cysteine hydrolases"/>
    <property type="match status" value="1"/>
</dbReference>
<gene>
    <name evidence="1" type="primary">cheD</name>
</gene>
<feature type="chain" id="PRO_0000251058" description="Probable chemoreceptor glutamine deamidase CheD">
    <location>
        <begin position="1"/>
        <end position="199"/>
    </location>
</feature>
<organism>
    <name type="scientific">Cereibacter sphaeroides</name>
    <name type="common">Rhodobacter sphaeroides</name>
    <dbReference type="NCBI Taxonomy" id="1063"/>
    <lineage>
        <taxon>Bacteria</taxon>
        <taxon>Pseudomonadati</taxon>
        <taxon>Pseudomonadota</taxon>
        <taxon>Alphaproteobacteria</taxon>
        <taxon>Rhodobacterales</taxon>
        <taxon>Paracoccaceae</taxon>
        <taxon>Cereibacter</taxon>
    </lineage>
</organism>
<proteinExistence type="inferred from homology"/>
<protein>
    <recommendedName>
        <fullName evidence="1">Probable chemoreceptor glutamine deamidase CheD</fullName>
        <ecNumber evidence="1">3.5.1.44</ecNumber>
    </recommendedName>
</protein>
<evidence type="ECO:0000255" key="1">
    <source>
        <dbReference type="HAMAP-Rule" id="MF_01440"/>
    </source>
</evidence>
<accession>Q9JN41</accession>
<keyword id="KW-0145">Chemotaxis</keyword>
<keyword id="KW-0378">Hydrolase</keyword>
<reference key="1">
    <citation type="journal article" date="1995" name="Mol. Microbiol.">
        <title>Identification of a chemotaxis operon with two cheY genes in Rhodobacter sphaeroides.</title>
        <authorList>
            <person name="Ward M.J."/>
            <person name="Bell A.W."/>
            <person name="Hamblin P.A."/>
            <person name="Packer H.L."/>
            <person name="Armitage J.P."/>
        </authorList>
    </citation>
    <scope>NUCLEOTIDE SEQUENCE [GENOMIC DNA]</scope>
    <source>
        <strain>WS8N</strain>
    </source>
</reference>